<proteinExistence type="inferred from homology"/>
<accession>A8A962</accession>
<protein>
    <recommendedName>
        <fullName evidence="1">3-dehydroquinate dehydratase</fullName>
        <shortName evidence="1">3-dehydroquinase</shortName>
        <ecNumber evidence="1">4.2.1.10</ecNumber>
    </recommendedName>
    <alternativeName>
        <fullName evidence="1">Type I DHQase</fullName>
    </alternativeName>
    <alternativeName>
        <fullName evidence="1">Type I dehydroquinase</fullName>
        <shortName evidence="1">DHQ1</shortName>
    </alternativeName>
</protein>
<keyword id="KW-0028">Amino-acid biosynthesis</keyword>
<keyword id="KW-0057">Aromatic amino acid biosynthesis</keyword>
<keyword id="KW-0456">Lyase</keyword>
<keyword id="KW-1185">Reference proteome</keyword>
<keyword id="KW-0704">Schiff base</keyword>
<evidence type="ECO:0000255" key="1">
    <source>
        <dbReference type="HAMAP-Rule" id="MF_00214"/>
    </source>
</evidence>
<dbReference type="EC" id="4.2.1.10" evidence="1"/>
<dbReference type="EMBL" id="CP000816">
    <property type="protein sequence ID" value="ABU81464.1"/>
    <property type="molecule type" value="Genomic_DNA"/>
</dbReference>
<dbReference type="RefSeq" id="WP_011998316.1">
    <property type="nucleotide sequence ID" value="NC_009776.1"/>
</dbReference>
<dbReference type="SMR" id="A8A962"/>
<dbReference type="STRING" id="453591.Igni_0280"/>
<dbReference type="GeneID" id="5563026"/>
<dbReference type="KEGG" id="iho:Igni_0280"/>
<dbReference type="eggNOG" id="arCOG02097">
    <property type="taxonomic scope" value="Archaea"/>
</dbReference>
<dbReference type="HOGENOM" id="CLU_064444_2_0_2"/>
<dbReference type="OrthoDB" id="34329at2157"/>
<dbReference type="PhylomeDB" id="A8A962"/>
<dbReference type="UniPathway" id="UPA00053">
    <property type="reaction ID" value="UER00086"/>
</dbReference>
<dbReference type="Proteomes" id="UP000000262">
    <property type="component" value="Chromosome"/>
</dbReference>
<dbReference type="GO" id="GO:0003855">
    <property type="term" value="F:3-dehydroquinate dehydratase activity"/>
    <property type="evidence" value="ECO:0007669"/>
    <property type="project" value="UniProtKB-UniRule"/>
</dbReference>
<dbReference type="GO" id="GO:0046279">
    <property type="term" value="P:3,4-dihydroxybenzoate biosynthetic process"/>
    <property type="evidence" value="ECO:0007669"/>
    <property type="project" value="TreeGrafter"/>
</dbReference>
<dbReference type="GO" id="GO:0008652">
    <property type="term" value="P:amino acid biosynthetic process"/>
    <property type="evidence" value="ECO:0007669"/>
    <property type="project" value="UniProtKB-KW"/>
</dbReference>
<dbReference type="GO" id="GO:0009073">
    <property type="term" value="P:aromatic amino acid family biosynthetic process"/>
    <property type="evidence" value="ECO:0007669"/>
    <property type="project" value="UniProtKB-KW"/>
</dbReference>
<dbReference type="GO" id="GO:0009423">
    <property type="term" value="P:chorismate biosynthetic process"/>
    <property type="evidence" value="ECO:0007669"/>
    <property type="project" value="UniProtKB-UniRule"/>
</dbReference>
<dbReference type="CDD" id="cd00502">
    <property type="entry name" value="DHQase_I"/>
    <property type="match status" value="1"/>
</dbReference>
<dbReference type="Gene3D" id="3.20.20.70">
    <property type="entry name" value="Aldolase class I"/>
    <property type="match status" value="1"/>
</dbReference>
<dbReference type="HAMAP" id="MF_00214">
    <property type="entry name" value="AroD"/>
    <property type="match status" value="1"/>
</dbReference>
<dbReference type="InterPro" id="IPR013785">
    <property type="entry name" value="Aldolase_TIM"/>
</dbReference>
<dbReference type="InterPro" id="IPR001381">
    <property type="entry name" value="DHquinase_I"/>
</dbReference>
<dbReference type="InterPro" id="IPR050146">
    <property type="entry name" value="Type-I_3-dehydroquinase"/>
</dbReference>
<dbReference type="PANTHER" id="PTHR43699">
    <property type="entry name" value="3-DEHYDROQUINATE DEHYDRATASE"/>
    <property type="match status" value="1"/>
</dbReference>
<dbReference type="PANTHER" id="PTHR43699:SF1">
    <property type="entry name" value="3-DEHYDROQUINATE DEHYDRATASE"/>
    <property type="match status" value="1"/>
</dbReference>
<dbReference type="Pfam" id="PF01487">
    <property type="entry name" value="DHquinase_I"/>
    <property type="match status" value="1"/>
</dbReference>
<dbReference type="SUPFAM" id="SSF51569">
    <property type="entry name" value="Aldolase"/>
    <property type="match status" value="1"/>
</dbReference>
<comment type="function">
    <text evidence="1">Involved in the third step of the chorismate pathway, which leads to the biosynthesis of aromatic amino acids. Catalyzes the cis-dehydration of 3-dehydroquinate (DHQ) and introduces the first double bond of the aromatic ring to yield 3-dehydroshikimate.</text>
</comment>
<comment type="catalytic activity">
    <reaction evidence="1">
        <text>3-dehydroquinate = 3-dehydroshikimate + H2O</text>
        <dbReference type="Rhea" id="RHEA:21096"/>
        <dbReference type="ChEBI" id="CHEBI:15377"/>
        <dbReference type="ChEBI" id="CHEBI:16630"/>
        <dbReference type="ChEBI" id="CHEBI:32364"/>
        <dbReference type="EC" id="4.2.1.10"/>
    </reaction>
</comment>
<comment type="pathway">
    <text evidence="1">Metabolic intermediate biosynthesis; chorismate biosynthesis; chorismate from D-erythrose 4-phosphate and phosphoenolpyruvate: step 3/7.</text>
</comment>
<comment type="subunit">
    <text evidence="1">Homodimer.</text>
</comment>
<comment type="similarity">
    <text evidence="1">Belongs to the type-I 3-dehydroquinase family.</text>
</comment>
<reference key="1">
    <citation type="journal article" date="2008" name="Genome Biol.">
        <title>A genomic analysis of the archaeal system Ignicoccus hospitalis-Nanoarchaeum equitans.</title>
        <authorList>
            <person name="Podar M."/>
            <person name="Anderson I."/>
            <person name="Makarova K.S."/>
            <person name="Elkins J.G."/>
            <person name="Ivanova N."/>
            <person name="Wall M.A."/>
            <person name="Lykidis A."/>
            <person name="Mavromatis K."/>
            <person name="Sun H."/>
            <person name="Hudson M.E."/>
            <person name="Chen W."/>
            <person name="Deciu C."/>
            <person name="Hutchison D."/>
            <person name="Eads J.R."/>
            <person name="Anderson A."/>
            <person name="Fernandes F."/>
            <person name="Szeto E."/>
            <person name="Lapidus A."/>
            <person name="Kyrpides N.C."/>
            <person name="Saier M.H. Jr."/>
            <person name="Richardson P.M."/>
            <person name="Rachel R."/>
            <person name="Huber H."/>
            <person name="Eisen J.A."/>
            <person name="Koonin E.V."/>
            <person name="Keller M."/>
            <person name="Stetter K.O."/>
        </authorList>
    </citation>
    <scope>NUCLEOTIDE SEQUENCE [LARGE SCALE GENOMIC DNA]</scope>
    <source>
        <strain>KIN4/I / DSM 18386 / JCM 14125</strain>
    </source>
</reference>
<sequence length="215" mass="23593">MYAVASIPFTDLGQVKKLIIKSAAAGADFVELRLDYWTRKETPPFLEMIELARNYGLDVIVTVRDPEEGGVWSPPWRGEAYEMASEAGAVCDVEVKKFKELPCDRAILSVHYFRKPPREGEVRKLSQRALEAGAWAFKVATVVTDFPSYFLLFSESVHPRTAFMPMGEGTEALRLASALLGSFLNYGSVGEATAPGQVSVRQLTKALSALGGRGD</sequence>
<feature type="chain" id="PRO_0000325533" description="3-dehydroquinate dehydratase">
    <location>
        <begin position="1"/>
        <end position="215"/>
    </location>
</feature>
<feature type="active site" description="Proton donor/acceptor" evidence="1">
    <location>
        <position position="111"/>
    </location>
</feature>
<feature type="active site" description="Schiff-base intermediate with substrate" evidence="1">
    <location>
        <position position="138"/>
    </location>
</feature>
<feature type="binding site" evidence="1">
    <location>
        <position position="6"/>
    </location>
    <ligand>
        <name>3-dehydroquinate</name>
        <dbReference type="ChEBI" id="CHEBI:32364"/>
    </ligand>
</feature>
<feature type="binding site" evidence="1">
    <location>
        <begin position="31"/>
        <end position="33"/>
    </location>
    <ligand>
        <name>3-dehydroquinate</name>
        <dbReference type="ChEBI" id="CHEBI:32364"/>
    </ligand>
</feature>
<feature type="binding site" evidence="1">
    <location>
        <position position="64"/>
    </location>
    <ligand>
        <name>3-dehydroquinate</name>
        <dbReference type="ChEBI" id="CHEBI:32364"/>
    </ligand>
</feature>
<feature type="binding site" evidence="1">
    <location>
        <position position="174"/>
    </location>
    <ligand>
        <name>3-dehydroquinate</name>
        <dbReference type="ChEBI" id="CHEBI:32364"/>
    </ligand>
</feature>
<feature type="binding site" evidence="1">
    <location>
        <position position="193"/>
    </location>
    <ligand>
        <name>3-dehydroquinate</name>
        <dbReference type="ChEBI" id="CHEBI:32364"/>
    </ligand>
</feature>
<feature type="binding site" evidence="1">
    <location>
        <position position="197"/>
    </location>
    <ligand>
        <name>3-dehydroquinate</name>
        <dbReference type="ChEBI" id="CHEBI:32364"/>
    </ligand>
</feature>
<gene>
    <name evidence="1" type="primary">aroD</name>
    <name type="ordered locus">Igni_0280</name>
</gene>
<name>AROD_IGNH4</name>
<organism>
    <name type="scientific">Ignicoccus hospitalis (strain KIN4/I / DSM 18386 / JCM 14125)</name>
    <dbReference type="NCBI Taxonomy" id="453591"/>
    <lineage>
        <taxon>Archaea</taxon>
        <taxon>Thermoproteota</taxon>
        <taxon>Thermoprotei</taxon>
        <taxon>Desulfurococcales</taxon>
        <taxon>Desulfurococcaceae</taxon>
        <taxon>Ignicoccus</taxon>
    </lineage>
</organism>